<proteinExistence type="inferred from homology"/>
<protein>
    <recommendedName>
        <fullName>Rhodopsin</fullName>
    </recommendedName>
</protein>
<feature type="chain" id="PRO_0000197651" description="Rhodopsin">
    <location>
        <begin position="1" status="less than"/>
        <end position="289" status="greater than"/>
    </location>
</feature>
<feature type="topological domain" description="Extracellular" evidence="7">
    <location>
        <begin position="1" status="less than"/>
        <end position="7"/>
    </location>
</feature>
<feature type="transmembrane region" description="Helical; Name=1" evidence="1">
    <location>
        <begin position="8"/>
        <end position="32"/>
    </location>
</feature>
<feature type="topological domain" description="Cytoplasmic" evidence="7">
    <location>
        <begin position="33"/>
        <end position="44"/>
    </location>
</feature>
<feature type="transmembrane region" description="Helical; Name=2" evidence="1">
    <location>
        <begin position="45"/>
        <end position="67"/>
    </location>
</feature>
<feature type="topological domain" description="Extracellular" evidence="7">
    <location>
        <begin position="68"/>
        <end position="81"/>
    </location>
</feature>
<feature type="transmembrane region" description="Helical; Name=3" evidence="1">
    <location>
        <begin position="82"/>
        <end position="104"/>
    </location>
</feature>
<feature type="topological domain" description="Cytoplasmic" evidence="7">
    <location>
        <begin position="105"/>
        <end position="123"/>
    </location>
</feature>
<feature type="transmembrane region" description="Helical; Name=4" evidence="1">
    <location>
        <begin position="124"/>
        <end position="144"/>
    </location>
</feature>
<feature type="topological domain" description="Extracellular" evidence="7">
    <location>
        <begin position="145"/>
        <end position="173"/>
    </location>
</feature>
<feature type="transmembrane region" description="Helical; Name=5" evidence="1">
    <location>
        <begin position="174"/>
        <end position="195"/>
    </location>
</feature>
<feature type="topological domain" description="Cytoplasmic" evidence="7">
    <location>
        <begin position="196"/>
        <end position="223"/>
    </location>
</feature>
<feature type="transmembrane region" description="Helical; Name=6" evidence="1">
    <location>
        <begin position="224"/>
        <end position="245"/>
    </location>
</feature>
<feature type="topological domain" description="Extracellular" evidence="7">
    <location>
        <begin position="246"/>
        <end position="257"/>
    </location>
</feature>
<feature type="transmembrane region" description="Helical; Name=7" evidence="1">
    <location>
        <begin position="258"/>
        <end position="279"/>
    </location>
</feature>
<feature type="topological domain" description="Cytoplasmic" evidence="7">
    <location>
        <begin position="280"/>
        <end position="289" status="greater than"/>
    </location>
</feature>
<feature type="short sequence motif" description="'Ionic lock' involved in activated form stabilization" evidence="1">
    <location>
        <begin position="105"/>
        <end position="107"/>
    </location>
</feature>
<feature type="site" description="Plays an important role in the conformation switch to the active conformation" evidence="1">
    <location>
        <position position="84"/>
    </location>
</feature>
<feature type="modified residue" description="N6-(retinylidene)lysine" evidence="1">
    <location>
        <position position="267"/>
    </location>
</feature>
<feature type="glycosylation site" description="N-linked (GlcNAc...) asparagine" evidence="5">
    <location>
        <position position="171"/>
    </location>
</feature>
<feature type="disulfide bond" evidence="6">
    <location>
        <begin position="81"/>
        <end position="158"/>
    </location>
</feature>
<feature type="non-terminal residue">
    <location>
        <position position="1"/>
    </location>
</feature>
<feature type="non-terminal residue">
    <location>
        <position position="289"/>
    </location>
</feature>
<sequence length="289" mass="32700">YLVSPAAYAALGAYMFLLILIGFPVNFLTLYVTLEHKKLRTPLNYILLNLAVADLFMVLGGFTTTMYTSMHGYFVLGRLGCNLEGFFATLGGEIALWSLVVLAIERWIVVCKPISNFRFTEDNAIMGLAFSWVMALTCAVPPLVGWSRYIPEGMQCSCGVDYYTRAEGFNNESFVIYMFIVHFPIPLSVIFFCYGRLLCAVKEAAAAQQESETTQRAEKEVSRMVVILVIGFLVCWLPYASVAWWIFCNQGSDFGPIFMTLPSFFAKRPAIYNPMIYICMNKQFRHCMI</sequence>
<gene>
    <name type="primary">rho</name>
</gene>
<name>OPSD_BATMU</name>
<evidence type="ECO:0000250" key="1">
    <source>
        <dbReference type="UniProtKB" id="P02699"/>
    </source>
</evidence>
<evidence type="ECO:0000250" key="2">
    <source>
        <dbReference type="UniProtKB" id="P08100"/>
    </source>
</evidence>
<evidence type="ECO:0000250" key="3">
    <source>
        <dbReference type="UniProtKB" id="P32309"/>
    </source>
</evidence>
<evidence type="ECO:0000250" key="4">
    <source>
        <dbReference type="UniProtKB" id="P35359"/>
    </source>
</evidence>
<evidence type="ECO:0000255" key="5"/>
<evidence type="ECO:0000255" key="6">
    <source>
        <dbReference type="PROSITE-ProRule" id="PRU00521"/>
    </source>
</evidence>
<evidence type="ECO:0000305" key="7"/>
<dbReference type="EMBL" id="U97267">
    <property type="protein sequence ID" value="AAB61721.1"/>
    <property type="molecule type" value="Genomic_DNA"/>
</dbReference>
<dbReference type="SMR" id="O42300"/>
<dbReference type="GlyCosmos" id="O42300">
    <property type="glycosylation" value="1 site, No reported glycans"/>
</dbReference>
<dbReference type="GO" id="GO:0016020">
    <property type="term" value="C:membrane"/>
    <property type="evidence" value="ECO:0000250"/>
    <property type="project" value="UniProtKB"/>
</dbReference>
<dbReference type="GO" id="GO:0097381">
    <property type="term" value="C:photoreceptor disc membrane"/>
    <property type="evidence" value="ECO:0000250"/>
    <property type="project" value="UniProtKB"/>
</dbReference>
<dbReference type="GO" id="GO:0005886">
    <property type="term" value="C:plasma membrane"/>
    <property type="evidence" value="ECO:0000250"/>
    <property type="project" value="UniProtKB"/>
</dbReference>
<dbReference type="GO" id="GO:0005502">
    <property type="term" value="F:11-cis retinal binding"/>
    <property type="evidence" value="ECO:0000250"/>
    <property type="project" value="UniProtKB"/>
</dbReference>
<dbReference type="GO" id="GO:0008020">
    <property type="term" value="F:G protein-coupled photoreceptor activity"/>
    <property type="evidence" value="ECO:0000250"/>
    <property type="project" value="UniProtKB"/>
</dbReference>
<dbReference type="GO" id="GO:0016038">
    <property type="term" value="P:absorption of visible light"/>
    <property type="evidence" value="ECO:0000250"/>
    <property type="project" value="UniProtKB"/>
</dbReference>
<dbReference type="GO" id="GO:0016056">
    <property type="term" value="P:G protein-coupled opsin signaling pathway"/>
    <property type="evidence" value="ECO:0000250"/>
    <property type="project" value="UniProtKB"/>
</dbReference>
<dbReference type="GO" id="GO:0007601">
    <property type="term" value="P:visual perception"/>
    <property type="evidence" value="ECO:0007669"/>
    <property type="project" value="UniProtKB-KW"/>
</dbReference>
<dbReference type="CDD" id="cd15080">
    <property type="entry name" value="7tmA_MWS_opsin"/>
    <property type="match status" value="1"/>
</dbReference>
<dbReference type="FunFam" id="1.20.1070.10:FF:000357">
    <property type="entry name" value="Rhodopsin"/>
    <property type="match status" value="1"/>
</dbReference>
<dbReference type="Gene3D" id="1.20.1070.10">
    <property type="entry name" value="Rhodopsin 7-helix transmembrane proteins"/>
    <property type="match status" value="1"/>
</dbReference>
<dbReference type="InterPro" id="IPR050125">
    <property type="entry name" value="GPCR_opsins"/>
</dbReference>
<dbReference type="InterPro" id="IPR000276">
    <property type="entry name" value="GPCR_Rhodpsn"/>
</dbReference>
<dbReference type="InterPro" id="IPR017452">
    <property type="entry name" value="GPCR_Rhodpsn_7TM"/>
</dbReference>
<dbReference type="InterPro" id="IPR001760">
    <property type="entry name" value="Opsin"/>
</dbReference>
<dbReference type="InterPro" id="IPR027430">
    <property type="entry name" value="Retinal_BS"/>
</dbReference>
<dbReference type="InterPro" id="IPR000732">
    <property type="entry name" value="Rhodopsin"/>
</dbReference>
<dbReference type="PANTHER" id="PTHR24240">
    <property type="entry name" value="OPSIN"/>
    <property type="match status" value="1"/>
</dbReference>
<dbReference type="Pfam" id="PF00001">
    <property type="entry name" value="7tm_1"/>
    <property type="match status" value="1"/>
</dbReference>
<dbReference type="PRINTS" id="PR00237">
    <property type="entry name" value="GPCRRHODOPSN"/>
</dbReference>
<dbReference type="PRINTS" id="PR00238">
    <property type="entry name" value="OPSIN"/>
</dbReference>
<dbReference type="PRINTS" id="PR00579">
    <property type="entry name" value="RHODOPSIN"/>
</dbReference>
<dbReference type="SUPFAM" id="SSF81321">
    <property type="entry name" value="Family A G protein-coupled receptor-like"/>
    <property type="match status" value="1"/>
</dbReference>
<dbReference type="PROSITE" id="PS00237">
    <property type="entry name" value="G_PROTEIN_RECEP_F1_1"/>
    <property type="match status" value="1"/>
</dbReference>
<dbReference type="PROSITE" id="PS50262">
    <property type="entry name" value="G_PROTEIN_RECEP_F1_2"/>
    <property type="match status" value="1"/>
</dbReference>
<dbReference type="PROSITE" id="PS00238">
    <property type="entry name" value="OPSIN"/>
    <property type="match status" value="1"/>
</dbReference>
<reference key="1">
    <citation type="journal article" date="1997" name="Mol. Phylogenet. Evol.">
        <title>Molecular evolution of the cottoid fish endemic to Lake Baikal deduced from nuclear DNA evidence.</title>
        <authorList>
            <person name="Hunt D.M."/>
            <person name="Fitzgibbon J."/>
            <person name="Slobodyanyuk S.J."/>
            <person name="Bowmaker J.K."/>
            <person name="Dulai K.S."/>
        </authorList>
    </citation>
    <scope>NUCLEOTIDE SEQUENCE [GENOMIC DNA]</scope>
</reference>
<keyword id="KW-0966">Cell projection</keyword>
<keyword id="KW-0157">Chromophore</keyword>
<keyword id="KW-1015">Disulfide bond</keyword>
<keyword id="KW-0297">G-protein coupled receptor</keyword>
<keyword id="KW-0325">Glycoprotein</keyword>
<keyword id="KW-0449">Lipoprotein</keyword>
<keyword id="KW-0472">Membrane</keyword>
<keyword id="KW-0564">Palmitate</keyword>
<keyword id="KW-0597">Phosphoprotein</keyword>
<keyword id="KW-0600">Photoreceptor protein</keyword>
<keyword id="KW-0675">Receptor</keyword>
<keyword id="KW-0681">Retinal protein</keyword>
<keyword id="KW-0716">Sensory transduction</keyword>
<keyword id="KW-0807">Transducer</keyword>
<keyword id="KW-0812">Transmembrane</keyword>
<keyword id="KW-1133">Transmembrane helix</keyword>
<keyword id="KW-0844">Vision</keyword>
<accession>O42300</accession>
<comment type="function">
    <text evidence="1 2 3">Photoreceptor required for image-forming vision at low light intensity. While most salt water fish species use retinal as chromophore, most freshwater fish use 3-dehydroretinal, or a mixture of retinal and 3-dehydroretinal (By similarity). Light-induced isomerization of 11-cis to all-trans retinal triggers a conformational change that activates signaling via G-proteins. Subsequent receptor phosphorylation mediates displacement of the bound G-protein alpha subunit by arrestin and terminates signaling (By similarity).</text>
</comment>
<comment type="subcellular location">
    <subcellularLocation>
        <location evidence="2">Membrane</location>
        <topology evidence="2">Multi-pass membrane protein</topology>
    </subcellularLocation>
    <subcellularLocation>
        <location evidence="4">Cell projection</location>
        <location evidence="4">Cilium</location>
        <location evidence="4">Photoreceptor outer segment</location>
    </subcellularLocation>
    <text evidence="2">Synthesized in the inner segment (IS) of rod photoreceptor cells before vectorial transport to disk membranes in the rod outer segment (OS) photosensory cilia.</text>
</comment>
<comment type="PTM">
    <text evidence="1">Phosphorylated on some or all of the serine and threonine residues present in the C-terminal region.</text>
</comment>
<comment type="PTM">
    <text evidence="1">Contains one covalently linked retinal chromophore.</text>
</comment>
<comment type="similarity">
    <text evidence="6">Belongs to the G-protein coupled receptor 1 family. Opsin subfamily.</text>
</comment>
<organism>
    <name type="scientific">Batrachocottus multiradiatus</name>
    <name type="common">Baikal sculpin</name>
    <name type="synonym">Batrachocottus nikolskii multiradiatus</name>
    <dbReference type="NCBI Taxonomy" id="61628"/>
    <lineage>
        <taxon>Eukaryota</taxon>
        <taxon>Metazoa</taxon>
        <taxon>Chordata</taxon>
        <taxon>Craniata</taxon>
        <taxon>Vertebrata</taxon>
        <taxon>Euteleostomi</taxon>
        <taxon>Actinopterygii</taxon>
        <taxon>Neopterygii</taxon>
        <taxon>Teleostei</taxon>
        <taxon>Neoteleostei</taxon>
        <taxon>Acanthomorphata</taxon>
        <taxon>Eupercaria</taxon>
        <taxon>Perciformes</taxon>
        <taxon>Cottioidei</taxon>
        <taxon>Cottales</taxon>
        <taxon>Cottidae</taxon>
        <taxon>Batrachocottus</taxon>
    </lineage>
</organism>